<keyword id="KW-1003">Cell membrane</keyword>
<keyword id="KW-0963">Cytoplasm</keyword>
<keyword id="KW-0217">Developmental protein</keyword>
<keyword id="KW-1015">Disulfide bond</keyword>
<keyword id="KW-0967">Endosome</keyword>
<keyword id="KW-0297">G-protein coupled receptor</keyword>
<keyword id="KW-0306">Gastrulation</keyword>
<keyword id="KW-0325">Glycoprotein</keyword>
<keyword id="KW-0458">Lysosome</keyword>
<keyword id="KW-0472">Membrane</keyword>
<keyword id="KW-0539">Nucleus</keyword>
<keyword id="KW-0675">Receptor</keyword>
<keyword id="KW-1185">Reference proteome</keyword>
<keyword id="KW-0765">Sulfation</keyword>
<keyword id="KW-0807">Transducer</keyword>
<keyword id="KW-0812">Transmembrane</keyword>
<keyword id="KW-1133">Transmembrane helix</keyword>
<proteinExistence type="evidence at transcript level"/>
<reference evidence="11 13" key="1">
    <citation type="journal article" date="2000" name="Eur. J. Immunol.">
        <title>Characterization of a Xenopus laevis CXC chemokine receptor 4: implications for hematopoietic cell development in the vertebrate embryo.</title>
        <authorList>
            <person name="Moepps B."/>
            <person name="Braun M."/>
            <person name="Knoepfle K."/>
            <person name="Dillinger K."/>
            <person name="Knoechel W."/>
            <person name="Gierschik P."/>
        </authorList>
    </citation>
    <scope>NUCLEOTIDE SEQUENCE [GENOMIC DNA / MRNA]</scope>
    <scope>FUNCTION</scope>
    <scope>TISSUE SPECIFICITY</scope>
    <scope>DEVELOPMENTAL STAGE</scope>
    <source>
        <tissue evidence="6">Gastrula</tissue>
    </source>
</reference>
<reference evidence="12" key="2">
    <citation type="submission" date="2004-06" db="EMBL/GenBank/DDBJ databases">
        <authorList>
            <consortium name="NIH - Xenopus Gene Collection (XGC) project"/>
        </authorList>
    </citation>
    <scope>NUCLEOTIDE SEQUENCE [LARGE SCALE MRNA]</scope>
    <source>
        <tissue evidence="12">Spleen</tissue>
    </source>
</reference>
<reference evidence="11" key="3">
    <citation type="journal article" date="2002" name="J. Immunol.">
        <title>Xenopus laevis stromal cell-derived factor 1: conservation of structure and function during vertebrate development.</title>
        <authorList>
            <person name="Braun M."/>
            <person name="Wunderlin M."/>
            <person name="Spieth K."/>
            <person name="Knoechel W."/>
            <person name="Gierschik P."/>
            <person name="Moepps B."/>
        </authorList>
    </citation>
    <scope>FUNCTION</scope>
</reference>
<reference evidence="11" key="4">
    <citation type="journal article" date="2005" name="Dev. Growth Differ.">
        <title>The mode and molecular mechanisms of the migration of presumptive PGC in the endoderm cell mass of Xenopus embryos.</title>
        <authorList>
            <person name="Nishiumi F."/>
            <person name="Komiya T."/>
            <person name="Ikenishi K."/>
        </authorList>
    </citation>
    <scope>PUTATIVE FUNCTION</scope>
    <scope>SUBCELLULAR LOCATION</scope>
    <scope>TISSUE SPECIFICITY</scope>
</reference>
<reference evidence="11" key="5">
    <citation type="journal article" date="2007" name="Biochem. Biophys. Res. Commun.">
        <title>SDF-1 alpha regulates mesendodermal cell migration during frog gastrulation.</title>
        <authorList>
            <person name="Fukui A."/>
            <person name="Goto T."/>
            <person name="Kitamoto J."/>
            <person name="Homma M."/>
            <person name="Asashima M."/>
        </authorList>
    </citation>
    <scope>FUNCTION</scope>
    <scope>DEVELOPMENTAL STAGE</scope>
</reference>
<evidence type="ECO:0000250" key="1"/>
<evidence type="ECO:0000250" key="2">
    <source>
        <dbReference type="UniProtKB" id="P61073"/>
    </source>
</evidence>
<evidence type="ECO:0000255" key="3"/>
<evidence type="ECO:0000255" key="4">
    <source>
        <dbReference type="PROSITE-ProRule" id="PRU00521"/>
    </source>
</evidence>
<evidence type="ECO:0000256" key="5">
    <source>
        <dbReference type="SAM" id="MobiDB-lite"/>
    </source>
</evidence>
<evidence type="ECO:0000269" key="6">
    <source>
    </source>
</evidence>
<evidence type="ECO:0000269" key="7">
    <source>
    </source>
</evidence>
<evidence type="ECO:0000269" key="8">
    <source>
    </source>
</evidence>
<evidence type="ECO:0000269" key="9">
    <source>
    </source>
</evidence>
<evidence type="ECO:0000303" key="10">
    <source>
    </source>
</evidence>
<evidence type="ECO:0000305" key="11"/>
<evidence type="ECO:0000312" key="12">
    <source>
        <dbReference type="EMBL" id="AAH73603.1"/>
    </source>
</evidence>
<evidence type="ECO:0000312" key="13">
    <source>
        <dbReference type="EMBL" id="CAA76923.1"/>
    </source>
</evidence>
<evidence type="ECO:0000312" key="14">
    <source>
        <dbReference type="EMBL" id="CAA76924.1"/>
    </source>
</evidence>
<feature type="chain" id="PRO_0000379452" description="C-X-C chemokine receptor type 4-A">
    <location>
        <begin position="1"/>
        <end position="358"/>
    </location>
</feature>
<feature type="topological domain" description="Extracellular" evidence="1">
    <location>
        <begin position="1"/>
        <end position="44"/>
    </location>
</feature>
<feature type="transmembrane region" description="Helical; Name=1" evidence="1">
    <location>
        <begin position="45"/>
        <end position="67"/>
    </location>
</feature>
<feature type="topological domain" description="Cytoplasmic" evidence="1">
    <location>
        <begin position="68"/>
        <end position="81"/>
    </location>
</feature>
<feature type="transmembrane region" description="Helical; Name=2" evidence="1">
    <location>
        <begin position="82"/>
        <end position="103"/>
    </location>
</feature>
<feature type="topological domain" description="Extracellular" evidence="1">
    <location>
        <begin position="104"/>
        <end position="114"/>
    </location>
</feature>
<feature type="transmembrane region" description="Helical; Name=3" evidence="1">
    <location>
        <begin position="115"/>
        <end position="134"/>
    </location>
</feature>
<feature type="topological domain" description="Cytoplasmic" evidence="1">
    <location>
        <begin position="135"/>
        <end position="158"/>
    </location>
</feature>
<feature type="transmembrane region" description="Helical; Name=4" evidence="1">
    <location>
        <begin position="159"/>
        <end position="178"/>
    </location>
</feature>
<feature type="topological domain" description="Extracellular" evidence="1">
    <location>
        <begin position="179"/>
        <end position="202"/>
    </location>
</feature>
<feature type="transmembrane region" description="Helical; Name=5" evidence="1">
    <location>
        <begin position="203"/>
        <end position="223"/>
    </location>
</feature>
<feature type="topological domain" description="Cytoplasmic" evidence="1">
    <location>
        <begin position="224"/>
        <end position="248"/>
    </location>
</feature>
<feature type="transmembrane region" description="Helical; Name=6" evidence="1">
    <location>
        <begin position="249"/>
        <end position="268"/>
    </location>
</feature>
<feature type="topological domain" description="Extracellular" evidence="1">
    <location>
        <begin position="269"/>
        <end position="289"/>
    </location>
</feature>
<feature type="transmembrane region" description="Helical; Name=7" evidence="1">
    <location>
        <begin position="290"/>
        <end position="309"/>
    </location>
</feature>
<feature type="topological domain" description="Cytoplasmic" evidence="1">
    <location>
        <begin position="310"/>
        <end position="358"/>
    </location>
</feature>
<feature type="region of interest" description="Important for chemokine binding and signaling" evidence="1">
    <location>
        <begin position="1"/>
        <end position="25"/>
    </location>
</feature>
<feature type="region of interest" description="Chemokine binding" evidence="1">
    <location>
        <begin position="98"/>
        <end position="101"/>
    </location>
</feature>
<feature type="region of interest" description="Chemokine binding" evidence="1">
    <location>
        <begin position="117"/>
        <end position="121"/>
    </location>
</feature>
<feature type="region of interest" description="Involved in dimerization; when bound to chemokine" evidence="1">
    <location>
        <begin position="139"/>
        <end position="151"/>
    </location>
</feature>
<feature type="region of interest" description="Chemokine binding, important for signaling" evidence="1">
    <location>
        <begin position="190"/>
        <end position="194"/>
    </location>
</feature>
<feature type="region of interest" description="Disordered" evidence="5">
    <location>
        <begin position="338"/>
        <end position="358"/>
    </location>
</feature>
<feature type="compositionally biased region" description="Low complexity" evidence="5">
    <location>
        <begin position="344"/>
        <end position="358"/>
    </location>
</feature>
<feature type="site" description="Chemokine binding" evidence="1">
    <location>
        <position position="175"/>
    </location>
</feature>
<feature type="site" description="Chemokine binding" evidence="1">
    <location>
        <position position="295"/>
    </location>
</feature>
<feature type="glycosylation site" description="N-linked (GlcNAc...) asparagine" evidence="3">
    <location>
        <position position="16"/>
    </location>
</feature>
<feature type="glycosylation site" description="N-linked (GlcNAc...) asparagine" evidence="3">
    <location>
        <position position="20"/>
    </location>
</feature>
<feature type="disulfide bond" evidence="4">
    <location>
        <begin position="32"/>
        <end position="281"/>
    </location>
</feature>
<feature type="disulfide bond" evidence="4">
    <location>
        <begin position="113"/>
        <end position="190"/>
    </location>
</feature>
<sequence length="358" mass="40079">MDGFSGGIDINIFDGNSTENGSGDFEDFIEPCFMHENSDFNRIFLPTIYSFIFLLGIIGNGLVVVVMGYQKKSRTMTDKYRLHLSVADLLFVFTLPFWSVDAAIGWYFKEFLCKAVHVIYTVNLYSSVLILAFISLDRYLAIVHATNSQGSRKMLADKVVYAGVWLPALLLTVPDLVFARVSDENGQFVCDRIYPIENRETWTVGFRFLHITVGLILPGLIILICYCVIISKLSHSKGHQKRKALKTTVILILAFFACWLPYYVCLTTDTFMLLGLVKGDCIWENTLHMAISITEALAFFHCCLNPILYAFLGAKFKTSAQNAFTSVSRGSSLKILSKKRAGLSSVSTESESSSFHSS</sequence>
<name>CXR4A_XENLA</name>
<accession>Q9YGC3</accession>
<gene>
    <name type="primary">cxcr4-a</name>
    <name evidence="14" type="synonym">cxcr4</name>
</gene>
<comment type="function">
    <text evidence="6 7 9">Receptor for the C-X-C chemokine cxcl12/sdf-1. Transduces a signal by increasing the intracellular level of calcium ions. Signaling with cxcl12/sdf-1 mediates the directional movement of mesodermal cells during gastrulation. May play a role in the migration of embryonic presumptive primordial germ cells (pPGCs). May also be involved in regulating the migration of hematopoietic stem cells into the larval liver.</text>
</comment>
<comment type="subunit">
    <text evidence="2">Monomer. Can form dimers (By similarity).</text>
</comment>
<comment type="subcellular location">
    <subcellularLocation>
        <location evidence="3">Cell membrane</location>
        <topology evidence="3">Multi-pass membrane protein</topology>
    </subcellularLocation>
    <subcellularLocation>
        <location evidence="8">Cytoplasm</location>
    </subcellularLocation>
    <subcellularLocation>
        <location evidence="8">Nucleus</location>
    </subcellularLocation>
    <subcellularLocation>
        <location evidence="1">Early endosome</location>
    </subcellularLocation>
    <subcellularLocation>
        <location evidence="1">Late endosome</location>
    </subcellularLocation>
    <subcellularLocation>
        <location evidence="1">Lysosome</location>
    </subcellularLocation>
    <text evidence="3 8">Expressed in the cytoplasm of a small number of embryonic pPGCs from stage 24. Expressed in the nucleus of 3 lateral pPGCs.</text>
</comment>
<comment type="tissue specificity">
    <text evidence="6 8">Highly expressed in the embryonic nervous system including forebrain, hindbrain and sensory organs (including eye), and in neural crest cells. Also expressed in the dorsal lateral plate, the first site of definitive hematopoiesis in the embryo. Appears in migrating presumptive primordial germ cells (pPGCs) from stage 24. Expressed in the epidermis at stage 40. In the adult, highly expressed in the spleen with lower levels of expression in the liver and very low levels in kidney, heart, skin and brain.</text>
</comment>
<comment type="developmental stage">
    <text evidence="6 9">Expression is up-regulated between stages 14-18 (early neurula stages) and remains high until stage 30, decreasing only at stage 45.</text>
</comment>
<comment type="PTM">
    <text evidence="2">Sulfation is required for efficient binding of cxcl12/sdf-1alpha and promotes its dimerization.</text>
</comment>
<comment type="PTM">
    <text evidence="2">O- and N-glycosylated.</text>
</comment>
<comment type="similarity">
    <text evidence="4">Belongs to the G-protein coupled receptor 1 family.</text>
</comment>
<organism>
    <name type="scientific">Xenopus laevis</name>
    <name type="common">African clawed frog</name>
    <dbReference type="NCBI Taxonomy" id="8355"/>
    <lineage>
        <taxon>Eukaryota</taxon>
        <taxon>Metazoa</taxon>
        <taxon>Chordata</taxon>
        <taxon>Craniata</taxon>
        <taxon>Vertebrata</taxon>
        <taxon>Euteleostomi</taxon>
        <taxon>Amphibia</taxon>
        <taxon>Batrachia</taxon>
        <taxon>Anura</taxon>
        <taxon>Pipoidea</taxon>
        <taxon>Pipidae</taxon>
        <taxon>Xenopodinae</taxon>
        <taxon>Xenopus</taxon>
        <taxon>Xenopus</taxon>
    </lineage>
</organism>
<protein>
    <recommendedName>
        <fullName>C-X-C chemokine receptor type 4-A</fullName>
        <shortName>CXC-R4-A</shortName>
        <shortName>CXCR-4-A</shortName>
        <shortName evidence="10">xCXCR4</shortName>
    </recommendedName>
    <alternativeName>
        <fullName>Stromal cell-derived factor 1 receptor A</fullName>
        <shortName>SDF-1 receptor A</shortName>
    </alternativeName>
</protein>
<dbReference type="EMBL" id="Y17894">
    <property type="protein sequence ID" value="CAA76923.1"/>
    <property type="molecule type" value="mRNA"/>
</dbReference>
<dbReference type="EMBL" id="Y17895">
    <property type="protein sequence ID" value="CAA76924.1"/>
    <property type="molecule type" value="Genomic_DNA"/>
</dbReference>
<dbReference type="EMBL" id="BC073603">
    <property type="protein sequence ID" value="AAH73603.1"/>
    <property type="molecule type" value="mRNA"/>
</dbReference>
<dbReference type="RefSeq" id="NP_001131053.1">
    <property type="nucleotide sequence ID" value="NM_001137581.1"/>
</dbReference>
<dbReference type="SMR" id="Q9YGC3"/>
<dbReference type="GlyCosmos" id="Q9YGC3">
    <property type="glycosylation" value="2 sites, No reported glycans"/>
</dbReference>
<dbReference type="DNASU" id="100192360"/>
<dbReference type="GeneID" id="100192360"/>
<dbReference type="KEGG" id="xla:100192360"/>
<dbReference type="AGR" id="Xenbase:XB-GENE-489921"/>
<dbReference type="CTD" id="100192360"/>
<dbReference type="Xenbase" id="XB-GENE-489921">
    <property type="gene designation" value="cxcr4.L"/>
</dbReference>
<dbReference type="OrthoDB" id="8413490at2759"/>
<dbReference type="Proteomes" id="UP000186698">
    <property type="component" value="Chromosome 9_10L"/>
</dbReference>
<dbReference type="Bgee" id="100192360">
    <property type="expression patterns" value="Expressed in spleen and 18 other cell types or tissues"/>
</dbReference>
<dbReference type="GO" id="GO:0005737">
    <property type="term" value="C:cytoplasm"/>
    <property type="evidence" value="ECO:0000314"/>
    <property type="project" value="UniProtKB"/>
</dbReference>
<dbReference type="GO" id="GO:0005769">
    <property type="term" value="C:early endosome"/>
    <property type="evidence" value="ECO:0000250"/>
    <property type="project" value="UniProtKB"/>
</dbReference>
<dbReference type="GO" id="GO:0009897">
    <property type="term" value="C:external side of plasma membrane"/>
    <property type="evidence" value="ECO:0000318"/>
    <property type="project" value="GO_Central"/>
</dbReference>
<dbReference type="GO" id="GO:0005770">
    <property type="term" value="C:late endosome"/>
    <property type="evidence" value="ECO:0000250"/>
    <property type="project" value="UniProtKB"/>
</dbReference>
<dbReference type="GO" id="GO:0005764">
    <property type="term" value="C:lysosome"/>
    <property type="evidence" value="ECO:0000250"/>
    <property type="project" value="UniProtKB"/>
</dbReference>
<dbReference type="GO" id="GO:0005634">
    <property type="term" value="C:nucleus"/>
    <property type="evidence" value="ECO:0000314"/>
    <property type="project" value="UniProtKB"/>
</dbReference>
<dbReference type="GO" id="GO:0005886">
    <property type="term" value="C:plasma membrane"/>
    <property type="evidence" value="ECO:0000250"/>
    <property type="project" value="UniProtKB"/>
</dbReference>
<dbReference type="GO" id="GO:0019957">
    <property type="term" value="F:C-C chemokine binding"/>
    <property type="evidence" value="ECO:0000318"/>
    <property type="project" value="GO_Central"/>
</dbReference>
<dbReference type="GO" id="GO:0016493">
    <property type="term" value="F:C-C chemokine receptor activity"/>
    <property type="evidence" value="ECO:0000318"/>
    <property type="project" value="GO_Central"/>
</dbReference>
<dbReference type="GO" id="GO:0016494">
    <property type="term" value="F:C-X-C chemokine receptor activity"/>
    <property type="evidence" value="ECO:0000314"/>
    <property type="project" value="UniProtKB"/>
</dbReference>
<dbReference type="GO" id="GO:0007420">
    <property type="term" value="P:brain development"/>
    <property type="evidence" value="ECO:0000318"/>
    <property type="project" value="GO_Central"/>
</dbReference>
<dbReference type="GO" id="GO:0019722">
    <property type="term" value="P:calcium-mediated signaling"/>
    <property type="evidence" value="ECO:0000318"/>
    <property type="project" value="GO_Central"/>
</dbReference>
<dbReference type="GO" id="GO:0060326">
    <property type="term" value="P:cell chemotaxis"/>
    <property type="evidence" value="ECO:0000318"/>
    <property type="project" value="GO_Central"/>
</dbReference>
<dbReference type="GO" id="GO:0071345">
    <property type="term" value="P:cellular response to cytokine stimulus"/>
    <property type="evidence" value="ECO:0000250"/>
    <property type="project" value="UniProtKB"/>
</dbReference>
<dbReference type="GO" id="GO:0060216">
    <property type="term" value="P:definitive hemopoiesis"/>
    <property type="evidence" value="ECO:0000270"/>
    <property type="project" value="UniProtKB"/>
</dbReference>
<dbReference type="GO" id="GO:0007186">
    <property type="term" value="P:G protein-coupled receptor signaling pathway"/>
    <property type="evidence" value="ECO:0000314"/>
    <property type="project" value="UniProtKB"/>
</dbReference>
<dbReference type="GO" id="GO:0008354">
    <property type="term" value="P:germ cell migration"/>
    <property type="evidence" value="ECO:0000270"/>
    <property type="project" value="UniProtKB"/>
</dbReference>
<dbReference type="GO" id="GO:0006955">
    <property type="term" value="P:immune response"/>
    <property type="evidence" value="ECO:0000318"/>
    <property type="project" value="GO_Central"/>
</dbReference>
<dbReference type="GO" id="GO:0007509">
    <property type="term" value="P:mesoderm migration involved in gastrulation"/>
    <property type="evidence" value="ECO:0000315"/>
    <property type="project" value="UniProtKB"/>
</dbReference>
<dbReference type="GO" id="GO:0022008">
    <property type="term" value="P:neurogenesis"/>
    <property type="evidence" value="ECO:0000318"/>
    <property type="project" value="GO_Central"/>
</dbReference>
<dbReference type="GO" id="GO:0007204">
    <property type="term" value="P:positive regulation of cytosolic calcium ion concentration"/>
    <property type="evidence" value="ECO:0000318"/>
    <property type="project" value="GO_Central"/>
</dbReference>
<dbReference type="CDD" id="cd15179">
    <property type="entry name" value="7tmA_CXCR4"/>
    <property type="match status" value="1"/>
</dbReference>
<dbReference type="FunFam" id="1.20.1070.10:FF:000063">
    <property type="entry name" value="C-X-C chemokine receptor type 4"/>
    <property type="match status" value="1"/>
</dbReference>
<dbReference type="Gene3D" id="1.20.1070.10">
    <property type="entry name" value="Rhodopsin 7-helix transmembrane proteins"/>
    <property type="match status" value="1"/>
</dbReference>
<dbReference type="InterPro" id="IPR050119">
    <property type="entry name" value="CCR1-9-like"/>
</dbReference>
<dbReference type="InterPro" id="IPR022726">
    <property type="entry name" value="Chemokine_CXCR4_N_dom"/>
</dbReference>
<dbReference type="InterPro" id="IPR000355">
    <property type="entry name" value="Chemokine_rcpt"/>
</dbReference>
<dbReference type="InterPro" id="IPR001277">
    <property type="entry name" value="CXCR4/ACKR2"/>
</dbReference>
<dbReference type="InterPro" id="IPR000276">
    <property type="entry name" value="GPCR_Rhodpsn"/>
</dbReference>
<dbReference type="InterPro" id="IPR017452">
    <property type="entry name" value="GPCR_Rhodpsn_7TM"/>
</dbReference>
<dbReference type="PANTHER" id="PTHR10489:SF594">
    <property type="entry name" value="C-X-C CHEMOKINE RECEPTOR TYPE 4"/>
    <property type="match status" value="1"/>
</dbReference>
<dbReference type="PANTHER" id="PTHR10489">
    <property type="entry name" value="CELL ADHESION MOLECULE"/>
    <property type="match status" value="1"/>
</dbReference>
<dbReference type="Pfam" id="PF00001">
    <property type="entry name" value="7tm_1"/>
    <property type="match status" value="1"/>
</dbReference>
<dbReference type="Pfam" id="PF12109">
    <property type="entry name" value="CXCR4_N"/>
    <property type="match status" value="1"/>
</dbReference>
<dbReference type="PRINTS" id="PR00657">
    <property type="entry name" value="CCCHEMOKINER"/>
</dbReference>
<dbReference type="PRINTS" id="PR00645">
    <property type="entry name" value="CXCCHMKINER4"/>
</dbReference>
<dbReference type="PRINTS" id="PR00237">
    <property type="entry name" value="GPCRRHODOPSN"/>
</dbReference>
<dbReference type="SUPFAM" id="SSF81321">
    <property type="entry name" value="Family A G protein-coupled receptor-like"/>
    <property type="match status" value="1"/>
</dbReference>
<dbReference type="PROSITE" id="PS00237">
    <property type="entry name" value="G_PROTEIN_RECEP_F1_1"/>
    <property type="match status" value="1"/>
</dbReference>
<dbReference type="PROSITE" id="PS50262">
    <property type="entry name" value="G_PROTEIN_RECEP_F1_2"/>
    <property type="match status" value="1"/>
</dbReference>